<dbReference type="EC" id="6.1.1.20" evidence="1"/>
<dbReference type="EMBL" id="CP001177">
    <property type="protein sequence ID" value="ACJ77878.1"/>
    <property type="molecule type" value="Genomic_DNA"/>
</dbReference>
<dbReference type="SMR" id="B7HRK2"/>
<dbReference type="KEGG" id="bcr:BCAH187_A4687"/>
<dbReference type="HOGENOM" id="CLU_025086_0_1_9"/>
<dbReference type="Proteomes" id="UP000002214">
    <property type="component" value="Chromosome"/>
</dbReference>
<dbReference type="GO" id="GO:0005737">
    <property type="term" value="C:cytoplasm"/>
    <property type="evidence" value="ECO:0007669"/>
    <property type="project" value="UniProtKB-SubCell"/>
</dbReference>
<dbReference type="GO" id="GO:0005524">
    <property type="term" value="F:ATP binding"/>
    <property type="evidence" value="ECO:0007669"/>
    <property type="project" value="UniProtKB-UniRule"/>
</dbReference>
<dbReference type="GO" id="GO:0140096">
    <property type="term" value="F:catalytic activity, acting on a protein"/>
    <property type="evidence" value="ECO:0007669"/>
    <property type="project" value="UniProtKB-ARBA"/>
</dbReference>
<dbReference type="GO" id="GO:0000287">
    <property type="term" value="F:magnesium ion binding"/>
    <property type="evidence" value="ECO:0007669"/>
    <property type="project" value="UniProtKB-UniRule"/>
</dbReference>
<dbReference type="GO" id="GO:0004826">
    <property type="term" value="F:phenylalanine-tRNA ligase activity"/>
    <property type="evidence" value="ECO:0007669"/>
    <property type="project" value="UniProtKB-UniRule"/>
</dbReference>
<dbReference type="GO" id="GO:0016740">
    <property type="term" value="F:transferase activity"/>
    <property type="evidence" value="ECO:0007669"/>
    <property type="project" value="UniProtKB-ARBA"/>
</dbReference>
<dbReference type="GO" id="GO:0000049">
    <property type="term" value="F:tRNA binding"/>
    <property type="evidence" value="ECO:0007669"/>
    <property type="project" value="InterPro"/>
</dbReference>
<dbReference type="GO" id="GO:0006432">
    <property type="term" value="P:phenylalanyl-tRNA aminoacylation"/>
    <property type="evidence" value="ECO:0007669"/>
    <property type="project" value="UniProtKB-UniRule"/>
</dbReference>
<dbReference type="CDD" id="cd00496">
    <property type="entry name" value="PheRS_alpha_core"/>
    <property type="match status" value="1"/>
</dbReference>
<dbReference type="FunFam" id="3.30.930.10:FF:000003">
    <property type="entry name" value="Phenylalanine--tRNA ligase alpha subunit"/>
    <property type="match status" value="1"/>
</dbReference>
<dbReference type="Gene3D" id="3.30.930.10">
    <property type="entry name" value="Bira Bifunctional Protein, Domain 2"/>
    <property type="match status" value="1"/>
</dbReference>
<dbReference type="HAMAP" id="MF_00281">
    <property type="entry name" value="Phe_tRNA_synth_alpha1"/>
    <property type="match status" value="1"/>
</dbReference>
<dbReference type="InterPro" id="IPR006195">
    <property type="entry name" value="aa-tRNA-synth_II"/>
</dbReference>
<dbReference type="InterPro" id="IPR045864">
    <property type="entry name" value="aa-tRNA-synth_II/BPL/LPL"/>
</dbReference>
<dbReference type="InterPro" id="IPR004529">
    <property type="entry name" value="Phe-tRNA-synth_IIc_asu"/>
</dbReference>
<dbReference type="InterPro" id="IPR004188">
    <property type="entry name" value="Phe-tRNA_ligase_II_N"/>
</dbReference>
<dbReference type="InterPro" id="IPR022911">
    <property type="entry name" value="Phe_tRNA_ligase_alpha1_bac"/>
</dbReference>
<dbReference type="InterPro" id="IPR002319">
    <property type="entry name" value="Phenylalanyl-tRNA_Synthase"/>
</dbReference>
<dbReference type="InterPro" id="IPR010978">
    <property type="entry name" value="tRNA-bd_arm"/>
</dbReference>
<dbReference type="NCBIfam" id="TIGR00468">
    <property type="entry name" value="pheS"/>
    <property type="match status" value="1"/>
</dbReference>
<dbReference type="PANTHER" id="PTHR11538:SF41">
    <property type="entry name" value="PHENYLALANINE--TRNA LIGASE, MITOCHONDRIAL"/>
    <property type="match status" value="1"/>
</dbReference>
<dbReference type="PANTHER" id="PTHR11538">
    <property type="entry name" value="PHENYLALANYL-TRNA SYNTHETASE"/>
    <property type="match status" value="1"/>
</dbReference>
<dbReference type="Pfam" id="PF02912">
    <property type="entry name" value="Phe_tRNA-synt_N"/>
    <property type="match status" value="1"/>
</dbReference>
<dbReference type="Pfam" id="PF01409">
    <property type="entry name" value="tRNA-synt_2d"/>
    <property type="match status" value="1"/>
</dbReference>
<dbReference type="SUPFAM" id="SSF55681">
    <property type="entry name" value="Class II aaRS and biotin synthetases"/>
    <property type="match status" value="1"/>
</dbReference>
<dbReference type="SUPFAM" id="SSF46589">
    <property type="entry name" value="tRNA-binding arm"/>
    <property type="match status" value="1"/>
</dbReference>
<dbReference type="PROSITE" id="PS50862">
    <property type="entry name" value="AA_TRNA_LIGASE_II"/>
    <property type="match status" value="1"/>
</dbReference>
<proteinExistence type="inferred from homology"/>
<reference key="1">
    <citation type="submission" date="2008-10" db="EMBL/GenBank/DDBJ databases">
        <title>Genome sequence of Bacillus cereus AH187.</title>
        <authorList>
            <person name="Dodson R.J."/>
            <person name="Durkin A.S."/>
            <person name="Rosovitz M.J."/>
            <person name="Rasko D.A."/>
            <person name="Kolsto A.B."/>
            <person name="Okstad O.A."/>
            <person name="Ravel J."/>
            <person name="Sutton G."/>
        </authorList>
    </citation>
    <scope>NUCLEOTIDE SEQUENCE [LARGE SCALE GENOMIC DNA]</scope>
    <source>
        <strain>AH187</strain>
    </source>
</reference>
<comment type="catalytic activity">
    <reaction evidence="1">
        <text>tRNA(Phe) + L-phenylalanine + ATP = L-phenylalanyl-tRNA(Phe) + AMP + diphosphate + H(+)</text>
        <dbReference type="Rhea" id="RHEA:19413"/>
        <dbReference type="Rhea" id="RHEA-COMP:9668"/>
        <dbReference type="Rhea" id="RHEA-COMP:9699"/>
        <dbReference type="ChEBI" id="CHEBI:15378"/>
        <dbReference type="ChEBI" id="CHEBI:30616"/>
        <dbReference type="ChEBI" id="CHEBI:33019"/>
        <dbReference type="ChEBI" id="CHEBI:58095"/>
        <dbReference type="ChEBI" id="CHEBI:78442"/>
        <dbReference type="ChEBI" id="CHEBI:78531"/>
        <dbReference type="ChEBI" id="CHEBI:456215"/>
        <dbReference type="EC" id="6.1.1.20"/>
    </reaction>
</comment>
<comment type="cofactor">
    <cofactor evidence="1">
        <name>Mg(2+)</name>
        <dbReference type="ChEBI" id="CHEBI:18420"/>
    </cofactor>
    <text evidence="1">Binds 2 magnesium ions per tetramer.</text>
</comment>
<comment type="subunit">
    <text evidence="1">Tetramer of two alpha and two beta subunits.</text>
</comment>
<comment type="subcellular location">
    <subcellularLocation>
        <location evidence="1">Cytoplasm</location>
    </subcellularLocation>
</comment>
<comment type="similarity">
    <text evidence="1">Belongs to the class-II aminoacyl-tRNA synthetase family. Phe-tRNA synthetase alpha subunit type 1 subfamily.</text>
</comment>
<keyword id="KW-0030">Aminoacyl-tRNA synthetase</keyword>
<keyword id="KW-0067">ATP-binding</keyword>
<keyword id="KW-0963">Cytoplasm</keyword>
<keyword id="KW-0436">Ligase</keyword>
<keyword id="KW-0460">Magnesium</keyword>
<keyword id="KW-0479">Metal-binding</keyword>
<keyword id="KW-0547">Nucleotide-binding</keyword>
<keyword id="KW-0648">Protein biosynthesis</keyword>
<accession>B7HRK2</accession>
<name>SYFA_BACC7</name>
<organism>
    <name type="scientific">Bacillus cereus (strain AH187)</name>
    <dbReference type="NCBI Taxonomy" id="405534"/>
    <lineage>
        <taxon>Bacteria</taxon>
        <taxon>Bacillati</taxon>
        <taxon>Bacillota</taxon>
        <taxon>Bacilli</taxon>
        <taxon>Bacillales</taxon>
        <taxon>Bacillaceae</taxon>
        <taxon>Bacillus</taxon>
        <taxon>Bacillus cereus group</taxon>
    </lineage>
</organism>
<feature type="chain" id="PRO_1000119389" description="Phenylalanine--tRNA ligase alpha subunit">
    <location>
        <begin position="1"/>
        <end position="344"/>
    </location>
</feature>
<feature type="binding site" evidence="1">
    <location>
        <position position="256"/>
    </location>
    <ligand>
        <name>Mg(2+)</name>
        <dbReference type="ChEBI" id="CHEBI:18420"/>
        <note>shared with beta subunit</note>
    </ligand>
</feature>
<sequence length="344" mass="38976">MEARLKELKQKALELIEEAKELKGLNDVRVAYLGKKGPITEVLRGMGKLSAEERPRMGALVNEVREAIQTRLDDKISNLEKAVIEAKLATETIDVTLPGRPVETGCHHPLTAVVEQIEDVFIGMGYEVAEGTEVEKDYYNFEALNLPKDHPARDMQDTFYITEETLLRTHTSSVQARTMENNKEKGPIKIICPGKVYRRDDDDATHSHQFMQIEGLVIDKNIRMSDLKGTLQVFVKKMFGEDREIRLRPSFFPFTEPSVEMDISCMMCHGKGCGTCKGTGWIEILGAGMVHPNVLEMAGYDSKEYQGFAFGMGAERIAMLKYGVDDIRHFYTNDVRFLQQFKRA</sequence>
<evidence type="ECO:0000255" key="1">
    <source>
        <dbReference type="HAMAP-Rule" id="MF_00281"/>
    </source>
</evidence>
<gene>
    <name evidence="1" type="primary">pheS</name>
    <name type="ordered locus">BCAH187_A4687</name>
</gene>
<protein>
    <recommendedName>
        <fullName evidence="1">Phenylalanine--tRNA ligase alpha subunit</fullName>
        <ecNumber evidence="1">6.1.1.20</ecNumber>
    </recommendedName>
    <alternativeName>
        <fullName evidence="1">Phenylalanyl-tRNA synthetase alpha subunit</fullName>
        <shortName evidence="1">PheRS</shortName>
    </alternativeName>
</protein>